<organism>
    <name type="scientific">Vibrio parahaemolyticus serotype O3:K6 (strain RIMD 2210633)</name>
    <dbReference type="NCBI Taxonomy" id="223926"/>
    <lineage>
        <taxon>Bacteria</taxon>
        <taxon>Pseudomonadati</taxon>
        <taxon>Pseudomonadota</taxon>
        <taxon>Gammaproteobacteria</taxon>
        <taxon>Vibrionales</taxon>
        <taxon>Vibrionaceae</taxon>
        <taxon>Vibrio</taxon>
    </lineage>
</organism>
<keyword id="KW-0238">DNA-binding</keyword>
<keyword id="KW-0678">Repressor</keyword>
<keyword id="KW-0804">Transcription</keyword>
<keyword id="KW-0805">Transcription regulation</keyword>
<comment type="function">
    <text evidence="1">Repressor involved in the biosynthesis of the osmoprotectant glycine betaine. It represses transcription of the choline transporter BetT and the genes of BetAB involved in the synthesis of glycine betaine (By similarity).</text>
</comment>
<comment type="pathway">
    <text>Amine and polyamine biosynthesis; betaine biosynthesis via choline pathway [regulation].</text>
</comment>
<protein>
    <recommendedName>
        <fullName evidence="2">HTH-type transcriptional regulator BetI</fullName>
    </recommendedName>
</protein>
<feature type="chain" id="PRO_0000070588" description="HTH-type transcriptional regulator BetI">
    <location>
        <begin position="1"/>
        <end position="199"/>
    </location>
</feature>
<feature type="domain" description="HTH tetR-type" evidence="2">
    <location>
        <begin position="8"/>
        <end position="68"/>
    </location>
</feature>
<feature type="DNA-binding region" description="H-T-H motif" evidence="2">
    <location>
        <begin position="31"/>
        <end position="50"/>
    </location>
</feature>
<dbReference type="EMBL" id="BA000032">
    <property type="protein sequence ID" value="BAC62457.1"/>
    <property type="molecule type" value="Genomic_DNA"/>
</dbReference>
<dbReference type="RefSeq" id="NP_800624.1">
    <property type="nucleotide sequence ID" value="NC_004605.1"/>
</dbReference>
<dbReference type="RefSeq" id="WP_005477071.1">
    <property type="nucleotide sequence ID" value="NC_004605.1"/>
</dbReference>
<dbReference type="SMR" id="Q87H51"/>
<dbReference type="GeneID" id="1191810"/>
<dbReference type="KEGG" id="vpa:VPA1114"/>
<dbReference type="PATRIC" id="fig|223926.6.peg.4040"/>
<dbReference type="eggNOG" id="COG1309">
    <property type="taxonomic scope" value="Bacteria"/>
</dbReference>
<dbReference type="HOGENOM" id="CLU_069356_15_4_6"/>
<dbReference type="UniPathway" id="UPA00529"/>
<dbReference type="Proteomes" id="UP000002493">
    <property type="component" value="Chromosome 2"/>
</dbReference>
<dbReference type="GO" id="GO:0003700">
    <property type="term" value="F:DNA-binding transcription factor activity"/>
    <property type="evidence" value="ECO:0007669"/>
    <property type="project" value="UniProtKB-UniRule"/>
</dbReference>
<dbReference type="GO" id="GO:0000976">
    <property type="term" value="F:transcription cis-regulatory region binding"/>
    <property type="evidence" value="ECO:0007669"/>
    <property type="project" value="TreeGrafter"/>
</dbReference>
<dbReference type="GO" id="GO:0019285">
    <property type="term" value="P:glycine betaine biosynthetic process from choline"/>
    <property type="evidence" value="ECO:0007669"/>
    <property type="project" value="UniProtKB-UniRule"/>
</dbReference>
<dbReference type="GO" id="GO:0045892">
    <property type="term" value="P:negative regulation of DNA-templated transcription"/>
    <property type="evidence" value="ECO:0007669"/>
    <property type="project" value="UniProtKB-UniRule"/>
</dbReference>
<dbReference type="Gene3D" id="1.10.357.10">
    <property type="entry name" value="Tetracycline Repressor, domain 2"/>
    <property type="match status" value="1"/>
</dbReference>
<dbReference type="HAMAP" id="MF_00768">
    <property type="entry name" value="HTH_type_BetI"/>
    <property type="match status" value="1"/>
</dbReference>
<dbReference type="InterPro" id="IPR039538">
    <property type="entry name" value="BetI_C"/>
</dbReference>
<dbReference type="InterPro" id="IPR023772">
    <property type="entry name" value="DNA-bd_HTH_TetR-type_CS"/>
</dbReference>
<dbReference type="InterPro" id="IPR009057">
    <property type="entry name" value="Homeodomain-like_sf"/>
</dbReference>
<dbReference type="InterPro" id="IPR050109">
    <property type="entry name" value="HTH-type_TetR-like_transc_reg"/>
</dbReference>
<dbReference type="InterPro" id="IPR001647">
    <property type="entry name" value="HTH_TetR"/>
</dbReference>
<dbReference type="InterPro" id="IPR036271">
    <property type="entry name" value="Tet_transcr_reg_TetR-rel_C_sf"/>
</dbReference>
<dbReference type="InterPro" id="IPR017757">
    <property type="entry name" value="Tscrpt_rep_BetI"/>
</dbReference>
<dbReference type="NCBIfam" id="TIGR03384">
    <property type="entry name" value="betaine_BetI"/>
    <property type="match status" value="1"/>
</dbReference>
<dbReference type="NCBIfam" id="NF001978">
    <property type="entry name" value="PRK00767.1"/>
    <property type="match status" value="1"/>
</dbReference>
<dbReference type="PANTHER" id="PTHR30055:SF234">
    <property type="entry name" value="HTH-TYPE TRANSCRIPTIONAL REGULATOR BETI"/>
    <property type="match status" value="1"/>
</dbReference>
<dbReference type="PANTHER" id="PTHR30055">
    <property type="entry name" value="HTH-TYPE TRANSCRIPTIONAL REGULATOR RUTR"/>
    <property type="match status" value="1"/>
</dbReference>
<dbReference type="Pfam" id="PF13977">
    <property type="entry name" value="TetR_C_6"/>
    <property type="match status" value="1"/>
</dbReference>
<dbReference type="Pfam" id="PF00440">
    <property type="entry name" value="TetR_N"/>
    <property type="match status" value="1"/>
</dbReference>
<dbReference type="SUPFAM" id="SSF46689">
    <property type="entry name" value="Homeodomain-like"/>
    <property type="match status" value="1"/>
</dbReference>
<dbReference type="SUPFAM" id="SSF48498">
    <property type="entry name" value="Tetracyclin repressor-like, C-terminal domain"/>
    <property type="match status" value="1"/>
</dbReference>
<dbReference type="PROSITE" id="PS01081">
    <property type="entry name" value="HTH_TETR_1"/>
    <property type="match status" value="1"/>
</dbReference>
<dbReference type="PROSITE" id="PS50977">
    <property type="entry name" value="HTH_TETR_2"/>
    <property type="match status" value="1"/>
</dbReference>
<proteinExistence type="inferred from homology"/>
<reference key="1">
    <citation type="journal article" date="2003" name="Lancet">
        <title>Genome sequence of Vibrio parahaemolyticus: a pathogenic mechanism distinct from that of V. cholerae.</title>
        <authorList>
            <person name="Makino K."/>
            <person name="Oshima K."/>
            <person name="Kurokawa K."/>
            <person name="Yokoyama K."/>
            <person name="Uda T."/>
            <person name="Tagomori K."/>
            <person name="Iijima Y."/>
            <person name="Najima M."/>
            <person name="Nakano M."/>
            <person name="Yamashita A."/>
            <person name="Kubota Y."/>
            <person name="Kimura S."/>
            <person name="Yasunaga T."/>
            <person name="Honda T."/>
            <person name="Shinagawa H."/>
            <person name="Hattori M."/>
            <person name="Iida T."/>
        </authorList>
    </citation>
    <scope>NUCLEOTIDE SEQUENCE [LARGE SCALE GENOMIC DNA]</scope>
    <source>
        <strain>RIMD 2210633</strain>
    </source>
</reference>
<sequence length="199" mass="22409">MPKVGMPEIRKPQLVKATMSVIDRVGLHAASISLISKEAGVSTGIINHYFGGKHGLLEETMREILRQLSSTITGKLRALPADAHHQRINAIIDGNFVGYQAENKVAKTWLAFWSYSMHDEQLKRLQRVNERRLLSHLRRELKALLSAEQAELVAHGIASLIDGIWLRGTLNPQGIEADKARIIINDYLDKQLTFYSHKI</sequence>
<gene>
    <name evidence="2" type="primary">betI</name>
    <name type="ordered locus">VPA1114</name>
</gene>
<name>BETI_VIBPA</name>
<accession>Q87H51</accession>
<evidence type="ECO:0000250" key="1"/>
<evidence type="ECO:0000255" key="2">
    <source>
        <dbReference type="HAMAP-Rule" id="MF_00768"/>
    </source>
</evidence>